<protein>
    <recommendedName>
        <fullName evidence="1">Serine--tRNA ligase</fullName>
        <ecNumber evidence="1">6.1.1.11</ecNumber>
    </recommendedName>
    <alternativeName>
        <fullName evidence="1">Seryl-tRNA synthetase</fullName>
        <shortName evidence="1">SerRS</shortName>
    </alternativeName>
    <alternativeName>
        <fullName evidence="1">Seryl-tRNA(Ser/Sec) synthetase</fullName>
    </alternativeName>
</protein>
<accession>B0KAI8</accession>
<comment type="function">
    <text evidence="1">Catalyzes the attachment of serine to tRNA(Ser). Is also able to aminoacylate tRNA(Sec) with serine, to form the misacylated tRNA L-seryl-tRNA(Sec), which will be further converted into selenocysteinyl-tRNA(Sec).</text>
</comment>
<comment type="catalytic activity">
    <reaction evidence="1">
        <text>tRNA(Ser) + L-serine + ATP = L-seryl-tRNA(Ser) + AMP + diphosphate + H(+)</text>
        <dbReference type="Rhea" id="RHEA:12292"/>
        <dbReference type="Rhea" id="RHEA-COMP:9669"/>
        <dbReference type="Rhea" id="RHEA-COMP:9703"/>
        <dbReference type="ChEBI" id="CHEBI:15378"/>
        <dbReference type="ChEBI" id="CHEBI:30616"/>
        <dbReference type="ChEBI" id="CHEBI:33019"/>
        <dbReference type="ChEBI" id="CHEBI:33384"/>
        <dbReference type="ChEBI" id="CHEBI:78442"/>
        <dbReference type="ChEBI" id="CHEBI:78533"/>
        <dbReference type="ChEBI" id="CHEBI:456215"/>
        <dbReference type="EC" id="6.1.1.11"/>
    </reaction>
</comment>
<comment type="catalytic activity">
    <reaction evidence="1">
        <text>tRNA(Sec) + L-serine + ATP = L-seryl-tRNA(Sec) + AMP + diphosphate + H(+)</text>
        <dbReference type="Rhea" id="RHEA:42580"/>
        <dbReference type="Rhea" id="RHEA-COMP:9742"/>
        <dbReference type="Rhea" id="RHEA-COMP:10128"/>
        <dbReference type="ChEBI" id="CHEBI:15378"/>
        <dbReference type="ChEBI" id="CHEBI:30616"/>
        <dbReference type="ChEBI" id="CHEBI:33019"/>
        <dbReference type="ChEBI" id="CHEBI:33384"/>
        <dbReference type="ChEBI" id="CHEBI:78442"/>
        <dbReference type="ChEBI" id="CHEBI:78533"/>
        <dbReference type="ChEBI" id="CHEBI:456215"/>
        <dbReference type="EC" id="6.1.1.11"/>
    </reaction>
</comment>
<comment type="pathway">
    <text evidence="1">Aminoacyl-tRNA biosynthesis; selenocysteinyl-tRNA(Sec) biosynthesis; L-seryl-tRNA(Sec) from L-serine and tRNA(Sec): step 1/1.</text>
</comment>
<comment type="subunit">
    <text evidence="1">Homodimer. The tRNA molecule binds across the dimer.</text>
</comment>
<comment type="subcellular location">
    <subcellularLocation>
        <location evidence="1">Cytoplasm</location>
    </subcellularLocation>
</comment>
<comment type="domain">
    <text evidence="1">Consists of two distinct domains, a catalytic core and a N-terminal extension that is involved in tRNA binding.</text>
</comment>
<comment type="similarity">
    <text evidence="1">Belongs to the class-II aminoacyl-tRNA synthetase family. Type-1 seryl-tRNA synthetase subfamily.</text>
</comment>
<organism>
    <name type="scientific">Thermoanaerobacter pseudethanolicus (strain ATCC 33223 / 39E)</name>
    <name type="common">Clostridium thermohydrosulfuricum</name>
    <dbReference type="NCBI Taxonomy" id="340099"/>
    <lineage>
        <taxon>Bacteria</taxon>
        <taxon>Bacillati</taxon>
        <taxon>Bacillota</taxon>
        <taxon>Clostridia</taxon>
        <taxon>Thermoanaerobacterales</taxon>
        <taxon>Thermoanaerobacteraceae</taxon>
        <taxon>Thermoanaerobacter</taxon>
    </lineage>
</organism>
<reference key="1">
    <citation type="submission" date="2008-01" db="EMBL/GenBank/DDBJ databases">
        <title>Complete sequence of Thermoanaerobacter pseudethanolicus 39E.</title>
        <authorList>
            <person name="Copeland A."/>
            <person name="Lucas S."/>
            <person name="Lapidus A."/>
            <person name="Barry K."/>
            <person name="Glavina del Rio T."/>
            <person name="Dalin E."/>
            <person name="Tice H."/>
            <person name="Pitluck S."/>
            <person name="Bruce D."/>
            <person name="Goodwin L."/>
            <person name="Saunders E."/>
            <person name="Brettin T."/>
            <person name="Detter J.C."/>
            <person name="Han C."/>
            <person name="Schmutz J."/>
            <person name="Larimer F."/>
            <person name="Land M."/>
            <person name="Hauser L."/>
            <person name="Kyrpides N."/>
            <person name="Lykidis A."/>
            <person name="Hemme C."/>
            <person name="Fields M.W."/>
            <person name="He Z."/>
            <person name="Zhou J."/>
            <person name="Richardson P."/>
        </authorList>
    </citation>
    <scope>NUCLEOTIDE SEQUENCE [LARGE SCALE GENOMIC DNA]</scope>
    <source>
        <strain>ATCC 33223 / DSM 2355 / 39E</strain>
    </source>
</reference>
<evidence type="ECO:0000255" key="1">
    <source>
        <dbReference type="HAMAP-Rule" id="MF_00176"/>
    </source>
</evidence>
<keyword id="KW-0030">Aminoacyl-tRNA synthetase</keyword>
<keyword id="KW-0067">ATP-binding</keyword>
<keyword id="KW-0963">Cytoplasm</keyword>
<keyword id="KW-0436">Ligase</keyword>
<keyword id="KW-0547">Nucleotide-binding</keyword>
<keyword id="KW-0648">Protein biosynthesis</keyword>
<keyword id="KW-1185">Reference proteome</keyword>
<sequence length="423" mass="48878">MLDVKRIRNNPEAVRIAIELKGEKADIDRFLELDEKRRQMLVELETLKNRRNVESDNIAKLKREGKDASDLIAEMKELSDKIKEMEQEVKEVEEELERILWTIPNIPHESVPIGDSDEDNVEIRRWGEPRKFDFEPKPHWEIGQELDILDFEAAARVTGSRFTFYKGLGARLERALINFMLDLHIEKHGYTEVFPPFMVHRRSMFGTGQLPKFEEDAFKVYGTDYFLIPTAEVPVTNMYRDTIIDGDKLPIYHCAYSACFRQEAGSAGRDTRGLIRQHQFNKVELVKFTEPDKSYEELEKMTRDAEEVLQALGLPYRVVVICTGDLGFTASKKYDIEVWMPSYGRYVEISSCSNCEDFQARRANIKYRPKDGGKAQYVHTLNGSGVAVGRTFAAILENYQQEDGSVVIPEVLRPYMKVDVIKK</sequence>
<gene>
    <name evidence="1" type="primary">serS</name>
    <name type="ordered locus">Teth39_0029</name>
</gene>
<dbReference type="EC" id="6.1.1.11" evidence="1"/>
<dbReference type="EMBL" id="CP000924">
    <property type="protein sequence ID" value="ABY93702.1"/>
    <property type="molecule type" value="Genomic_DNA"/>
</dbReference>
<dbReference type="RefSeq" id="WP_009052033.1">
    <property type="nucleotide sequence ID" value="NC_010321.1"/>
</dbReference>
<dbReference type="SMR" id="B0KAI8"/>
<dbReference type="STRING" id="340099.Teth39_0029"/>
<dbReference type="KEGG" id="tpd:Teth39_0029"/>
<dbReference type="eggNOG" id="COG0172">
    <property type="taxonomic scope" value="Bacteria"/>
</dbReference>
<dbReference type="HOGENOM" id="CLU_023797_1_1_9"/>
<dbReference type="UniPathway" id="UPA00906">
    <property type="reaction ID" value="UER00895"/>
</dbReference>
<dbReference type="Proteomes" id="UP000002156">
    <property type="component" value="Chromosome"/>
</dbReference>
<dbReference type="GO" id="GO:0005737">
    <property type="term" value="C:cytoplasm"/>
    <property type="evidence" value="ECO:0007669"/>
    <property type="project" value="UniProtKB-SubCell"/>
</dbReference>
<dbReference type="GO" id="GO:0005524">
    <property type="term" value="F:ATP binding"/>
    <property type="evidence" value="ECO:0007669"/>
    <property type="project" value="UniProtKB-UniRule"/>
</dbReference>
<dbReference type="GO" id="GO:0140096">
    <property type="term" value="F:catalytic activity, acting on a protein"/>
    <property type="evidence" value="ECO:0007669"/>
    <property type="project" value="UniProtKB-ARBA"/>
</dbReference>
<dbReference type="GO" id="GO:0004828">
    <property type="term" value="F:serine-tRNA ligase activity"/>
    <property type="evidence" value="ECO:0007669"/>
    <property type="project" value="UniProtKB-UniRule"/>
</dbReference>
<dbReference type="GO" id="GO:0016740">
    <property type="term" value="F:transferase activity"/>
    <property type="evidence" value="ECO:0007669"/>
    <property type="project" value="UniProtKB-ARBA"/>
</dbReference>
<dbReference type="GO" id="GO:0016260">
    <property type="term" value="P:selenocysteine biosynthetic process"/>
    <property type="evidence" value="ECO:0007669"/>
    <property type="project" value="UniProtKB-UniRule"/>
</dbReference>
<dbReference type="GO" id="GO:0006434">
    <property type="term" value="P:seryl-tRNA aminoacylation"/>
    <property type="evidence" value="ECO:0007669"/>
    <property type="project" value="UniProtKB-UniRule"/>
</dbReference>
<dbReference type="CDD" id="cd00770">
    <property type="entry name" value="SerRS_core"/>
    <property type="match status" value="1"/>
</dbReference>
<dbReference type="Gene3D" id="3.30.930.10">
    <property type="entry name" value="Bira Bifunctional Protein, Domain 2"/>
    <property type="match status" value="1"/>
</dbReference>
<dbReference type="Gene3D" id="1.10.287.40">
    <property type="entry name" value="Serine-tRNA synthetase, tRNA binding domain"/>
    <property type="match status" value="1"/>
</dbReference>
<dbReference type="HAMAP" id="MF_00176">
    <property type="entry name" value="Ser_tRNA_synth_type1"/>
    <property type="match status" value="1"/>
</dbReference>
<dbReference type="InterPro" id="IPR002314">
    <property type="entry name" value="aa-tRNA-synt_IIb"/>
</dbReference>
<dbReference type="InterPro" id="IPR006195">
    <property type="entry name" value="aa-tRNA-synth_II"/>
</dbReference>
<dbReference type="InterPro" id="IPR045864">
    <property type="entry name" value="aa-tRNA-synth_II/BPL/LPL"/>
</dbReference>
<dbReference type="InterPro" id="IPR002317">
    <property type="entry name" value="Ser-tRNA-ligase_type_1"/>
</dbReference>
<dbReference type="InterPro" id="IPR015866">
    <property type="entry name" value="Ser-tRNA-synth_1_N"/>
</dbReference>
<dbReference type="InterPro" id="IPR042103">
    <property type="entry name" value="SerRS_1_N_sf"/>
</dbReference>
<dbReference type="InterPro" id="IPR033729">
    <property type="entry name" value="SerRS_core"/>
</dbReference>
<dbReference type="InterPro" id="IPR010978">
    <property type="entry name" value="tRNA-bd_arm"/>
</dbReference>
<dbReference type="NCBIfam" id="TIGR00414">
    <property type="entry name" value="serS"/>
    <property type="match status" value="1"/>
</dbReference>
<dbReference type="PANTHER" id="PTHR43697:SF1">
    <property type="entry name" value="SERINE--TRNA LIGASE"/>
    <property type="match status" value="1"/>
</dbReference>
<dbReference type="PANTHER" id="PTHR43697">
    <property type="entry name" value="SERYL-TRNA SYNTHETASE"/>
    <property type="match status" value="1"/>
</dbReference>
<dbReference type="Pfam" id="PF02403">
    <property type="entry name" value="Seryl_tRNA_N"/>
    <property type="match status" value="1"/>
</dbReference>
<dbReference type="Pfam" id="PF00587">
    <property type="entry name" value="tRNA-synt_2b"/>
    <property type="match status" value="1"/>
</dbReference>
<dbReference type="PIRSF" id="PIRSF001529">
    <property type="entry name" value="Ser-tRNA-synth_IIa"/>
    <property type="match status" value="1"/>
</dbReference>
<dbReference type="PRINTS" id="PR00981">
    <property type="entry name" value="TRNASYNTHSER"/>
</dbReference>
<dbReference type="SUPFAM" id="SSF55681">
    <property type="entry name" value="Class II aaRS and biotin synthetases"/>
    <property type="match status" value="1"/>
</dbReference>
<dbReference type="SUPFAM" id="SSF46589">
    <property type="entry name" value="tRNA-binding arm"/>
    <property type="match status" value="1"/>
</dbReference>
<dbReference type="PROSITE" id="PS50862">
    <property type="entry name" value="AA_TRNA_LIGASE_II"/>
    <property type="match status" value="1"/>
</dbReference>
<feature type="chain" id="PRO_1000098137" description="Serine--tRNA ligase">
    <location>
        <begin position="1"/>
        <end position="423"/>
    </location>
</feature>
<feature type="binding site" evidence="1">
    <location>
        <begin position="230"/>
        <end position="232"/>
    </location>
    <ligand>
        <name>L-serine</name>
        <dbReference type="ChEBI" id="CHEBI:33384"/>
    </ligand>
</feature>
<feature type="binding site" evidence="1">
    <location>
        <begin position="261"/>
        <end position="263"/>
    </location>
    <ligand>
        <name>ATP</name>
        <dbReference type="ChEBI" id="CHEBI:30616"/>
    </ligand>
</feature>
<feature type="binding site" evidence="1">
    <location>
        <position position="284"/>
    </location>
    <ligand>
        <name>L-serine</name>
        <dbReference type="ChEBI" id="CHEBI:33384"/>
    </ligand>
</feature>
<feature type="binding site" evidence="1">
    <location>
        <begin position="348"/>
        <end position="351"/>
    </location>
    <ligand>
        <name>ATP</name>
        <dbReference type="ChEBI" id="CHEBI:30616"/>
    </ligand>
</feature>
<feature type="binding site" evidence="1">
    <location>
        <position position="384"/>
    </location>
    <ligand>
        <name>L-serine</name>
        <dbReference type="ChEBI" id="CHEBI:33384"/>
    </ligand>
</feature>
<proteinExistence type="inferred from homology"/>
<name>SYS_THEP3</name>